<dbReference type="EMBL" id="AAFI02000175">
    <property type="protein sequence ID" value="EAL61876.1"/>
    <property type="molecule type" value="Genomic_DNA"/>
</dbReference>
<dbReference type="RefSeq" id="XP_635352.1">
    <property type="nucleotide sequence ID" value="XM_630260.1"/>
</dbReference>
<dbReference type="FunCoup" id="Q54F38">
    <property type="interactions" value="222"/>
</dbReference>
<dbReference type="STRING" id="44689.Q54F38"/>
<dbReference type="GlyGen" id="Q54F38">
    <property type="glycosylation" value="1 site"/>
</dbReference>
<dbReference type="PaxDb" id="44689-DDB0219987"/>
<dbReference type="EnsemblProtists" id="EAL61876">
    <property type="protein sequence ID" value="EAL61876"/>
    <property type="gene ID" value="DDB_G0291185"/>
</dbReference>
<dbReference type="GeneID" id="8628000"/>
<dbReference type="KEGG" id="ddi:DDB_G0291185"/>
<dbReference type="dictyBase" id="DDB_G0291185">
    <property type="gene designation" value="H3v1"/>
</dbReference>
<dbReference type="VEuPathDB" id="AmoebaDB:DDB_G0291185"/>
<dbReference type="eggNOG" id="KOG1745">
    <property type="taxonomic scope" value="Eukaryota"/>
</dbReference>
<dbReference type="HOGENOM" id="CLU_441750_0_0_1"/>
<dbReference type="InParanoid" id="Q54F38"/>
<dbReference type="OMA" id="NDRSFHI"/>
<dbReference type="PRO" id="PR:Q54F38"/>
<dbReference type="Proteomes" id="UP000002195">
    <property type="component" value="Chromosome 5"/>
</dbReference>
<dbReference type="GO" id="GO:0005813">
    <property type="term" value="C:centrosome"/>
    <property type="evidence" value="ECO:0000314"/>
    <property type="project" value="dictyBase"/>
</dbReference>
<dbReference type="GO" id="GO:0000786">
    <property type="term" value="C:nucleosome"/>
    <property type="evidence" value="ECO:0007669"/>
    <property type="project" value="InterPro"/>
</dbReference>
<dbReference type="GO" id="GO:0005634">
    <property type="term" value="C:nucleus"/>
    <property type="evidence" value="ECO:0000318"/>
    <property type="project" value="GO_Central"/>
</dbReference>
<dbReference type="GO" id="GO:0003677">
    <property type="term" value="F:DNA binding"/>
    <property type="evidence" value="ECO:0007669"/>
    <property type="project" value="InterPro"/>
</dbReference>
<dbReference type="GO" id="GO:0046982">
    <property type="term" value="F:protein heterodimerization activity"/>
    <property type="evidence" value="ECO:0007669"/>
    <property type="project" value="InterPro"/>
</dbReference>
<dbReference type="GO" id="GO:0030527">
    <property type="term" value="F:structural constituent of chromatin"/>
    <property type="evidence" value="ECO:0007669"/>
    <property type="project" value="InterPro"/>
</dbReference>
<dbReference type="CDD" id="cd22911">
    <property type="entry name" value="HFD_H3"/>
    <property type="match status" value="1"/>
</dbReference>
<dbReference type="FunFam" id="1.10.20.10:FF:000088">
    <property type="entry name" value="Histone H3-like centromeric protein CSE4"/>
    <property type="match status" value="1"/>
</dbReference>
<dbReference type="Gene3D" id="1.10.20.10">
    <property type="entry name" value="Histone, subunit A"/>
    <property type="match status" value="1"/>
</dbReference>
<dbReference type="InterPro" id="IPR009072">
    <property type="entry name" value="Histone-fold"/>
</dbReference>
<dbReference type="InterPro" id="IPR007125">
    <property type="entry name" value="Histone_H2A/H2B/H3"/>
</dbReference>
<dbReference type="InterPro" id="IPR000164">
    <property type="entry name" value="Histone_H3/CENP-A"/>
</dbReference>
<dbReference type="PANTHER" id="PTHR45810:SF1">
    <property type="entry name" value="HISTONE H3-LIKE CENTROMERIC PROTEIN A"/>
    <property type="match status" value="1"/>
</dbReference>
<dbReference type="PANTHER" id="PTHR45810">
    <property type="entry name" value="HISTONE H3.2"/>
    <property type="match status" value="1"/>
</dbReference>
<dbReference type="Pfam" id="PF00125">
    <property type="entry name" value="Histone"/>
    <property type="match status" value="1"/>
</dbReference>
<dbReference type="SMART" id="SM00428">
    <property type="entry name" value="H3"/>
    <property type="match status" value="1"/>
</dbReference>
<dbReference type="SUPFAM" id="SSF47113">
    <property type="entry name" value="Histone-fold"/>
    <property type="match status" value="1"/>
</dbReference>
<proteinExistence type="inferred from homology"/>
<organism>
    <name type="scientific">Dictyostelium discoideum</name>
    <name type="common">Social amoeba</name>
    <dbReference type="NCBI Taxonomy" id="44689"/>
    <lineage>
        <taxon>Eukaryota</taxon>
        <taxon>Amoebozoa</taxon>
        <taxon>Evosea</taxon>
        <taxon>Eumycetozoa</taxon>
        <taxon>Dictyostelia</taxon>
        <taxon>Dictyosteliales</taxon>
        <taxon>Dictyosteliaceae</taxon>
        <taxon>Dictyostelium</taxon>
    </lineage>
</organism>
<reference key="1">
    <citation type="journal article" date="2005" name="Nature">
        <title>The genome of the social amoeba Dictyostelium discoideum.</title>
        <authorList>
            <person name="Eichinger L."/>
            <person name="Pachebat J.A."/>
            <person name="Gloeckner G."/>
            <person name="Rajandream M.A."/>
            <person name="Sucgang R."/>
            <person name="Berriman M."/>
            <person name="Song J."/>
            <person name="Olsen R."/>
            <person name="Szafranski K."/>
            <person name="Xu Q."/>
            <person name="Tunggal B."/>
            <person name="Kummerfeld S."/>
            <person name="Madera M."/>
            <person name="Konfortov B.A."/>
            <person name="Rivero F."/>
            <person name="Bankier A.T."/>
            <person name="Lehmann R."/>
            <person name="Hamlin N."/>
            <person name="Davies R."/>
            <person name="Gaudet P."/>
            <person name="Fey P."/>
            <person name="Pilcher K."/>
            <person name="Chen G."/>
            <person name="Saunders D."/>
            <person name="Sodergren E.J."/>
            <person name="Davis P."/>
            <person name="Kerhornou A."/>
            <person name="Nie X."/>
            <person name="Hall N."/>
            <person name="Anjard C."/>
            <person name="Hemphill L."/>
            <person name="Bason N."/>
            <person name="Farbrother P."/>
            <person name="Desany B."/>
            <person name="Just E."/>
            <person name="Morio T."/>
            <person name="Rost R."/>
            <person name="Churcher C.M."/>
            <person name="Cooper J."/>
            <person name="Haydock S."/>
            <person name="van Driessche N."/>
            <person name="Cronin A."/>
            <person name="Goodhead I."/>
            <person name="Muzny D.M."/>
            <person name="Mourier T."/>
            <person name="Pain A."/>
            <person name="Lu M."/>
            <person name="Harper D."/>
            <person name="Lindsay R."/>
            <person name="Hauser H."/>
            <person name="James K.D."/>
            <person name="Quiles M."/>
            <person name="Madan Babu M."/>
            <person name="Saito T."/>
            <person name="Buchrieser C."/>
            <person name="Wardroper A."/>
            <person name="Felder M."/>
            <person name="Thangavelu M."/>
            <person name="Johnson D."/>
            <person name="Knights A."/>
            <person name="Loulseged H."/>
            <person name="Mungall K.L."/>
            <person name="Oliver K."/>
            <person name="Price C."/>
            <person name="Quail M.A."/>
            <person name="Urushihara H."/>
            <person name="Hernandez J."/>
            <person name="Rabbinowitsch E."/>
            <person name="Steffen D."/>
            <person name="Sanders M."/>
            <person name="Ma J."/>
            <person name="Kohara Y."/>
            <person name="Sharp S."/>
            <person name="Simmonds M.N."/>
            <person name="Spiegler S."/>
            <person name="Tivey A."/>
            <person name="Sugano S."/>
            <person name="White B."/>
            <person name="Walker D."/>
            <person name="Woodward J.R."/>
            <person name="Winckler T."/>
            <person name="Tanaka Y."/>
            <person name="Shaulsky G."/>
            <person name="Schleicher M."/>
            <person name="Weinstock G.M."/>
            <person name="Rosenthal A."/>
            <person name="Cox E.C."/>
            <person name="Chisholm R.L."/>
            <person name="Gibbs R.A."/>
            <person name="Loomis W.F."/>
            <person name="Platzer M."/>
            <person name="Kay R.R."/>
            <person name="Williams J.G."/>
            <person name="Dear P.H."/>
            <person name="Noegel A.A."/>
            <person name="Barrell B.G."/>
            <person name="Kuspa A."/>
        </authorList>
    </citation>
    <scope>NUCLEOTIDE SEQUENCE [LARGE SCALE GENOMIC DNA]</scope>
    <source>
        <strain>AX4</strain>
    </source>
</reference>
<name>H3V1_DICDI</name>
<evidence type="ECO:0000256" key="1">
    <source>
        <dbReference type="SAM" id="MobiDB-lite"/>
    </source>
</evidence>
<evidence type="ECO:0000305" key="2"/>
<keyword id="KW-1185">Reference proteome</keyword>
<feature type="chain" id="PRO_0000389163" description="Histone H3.v1">
    <location>
        <begin position="1"/>
        <end position="619"/>
    </location>
</feature>
<feature type="region of interest" description="Disordered" evidence="1">
    <location>
        <begin position="1"/>
        <end position="99"/>
    </location>
</feature>
<feature type="region of interest" description="Disordered" evidence="1">
    <location>
        <begin position="190"/>
        <end position="526"/>
    </location>
</feature>
<feature type="compositionally biased region" description="Basic and acidic residues" evidence="1">
    <location>
        <begin position="1"/>
        <end position="15"/>
    </location>
</feature>
<feature type="compositionally biased region" description="Low complexity" evidence="1">
    <location>
        <begin position="28"/>
        <end position="50"/>
    </location>
</feature>
<feature type="compositionally biased region" description="Low complexity" evidence="1">
    <location>
        <begin position="66"/>
        <end position="99"/>
    </location>
</feature>
<feature type="compositionally biased region" description="Acidic residues" evidence="1">
    <location>
        <begin position="230"/>
        <end position="287"/>
    </location>
</feature>
<feature type="compositionally biased region" description="Low complexity" evidence="1">
    <location>
        <begin position="296"/>
        <end position="306"/>
    </location>
</feature>
<feature type="compositionally biased region" description="Low complexity" evidence="1">
    <location>
        <begin position="314"/>
        <end position="325"/>
    </location>
</feature>
<feature type="compositionally biased region" description="Basic residues" evidence="1">
    <location>
        <begin position="326"/>
        <end position="344"/>
    </location>
</feature>
<feature type="compositionally biased region" description="Low complexity" evidence="1">
    <location>
        <begin position="345"/>
        <end position="360"/>
    </location>
</feature>
<feature type="compositionally biased region" description="Low complexity" evidence="1">
    <location>
        <begin position="385"/>
        <end position="408"/>
    </location>
</feature>
<feature type="compositionally biased region" description="Low complexity" evidence="1">
    <location>
        <begin position="415"/>
        <end position="521"/>
    </location>
</feature>
<gene>
    <name type="primary">H3v1</name>
    <name type="ORF">DDB_G0291185</name>
</gene>
<comment type="similarity">
    <text evidence="2">Belongs to the histone H3 family.</text>
</comment>
<comment type="caution">
    <text evidence="2">In contrast to other members of the histone H3 family, this protein is much longer and has a highly divergent N-terminus. It is therefore unclear whether it is a real histone.</text>
</comment>
<accession>Q54F38</accession>
<sequence>MANKPKPSEHLRDLIRSGQRTSPEADLQLKQQQQPRQTQPSRPSSSLTQSYEPPGTTRVPVSPVISTSESSGSSRSPASSGSSRSSGSSGSSRLSGSSRASVNTIMNLSNIEFNDTPSVTDDSYYTNVMTESPIRKAASQRLPTGVMDSIRGSLENINVSHNLTPTTPLSKPNTLMYKKGAPAPPRLTPILPSYKTNLKPVVQTPKIQRKTSQIEEESDDDSSSQNNSSDQEEEEEEEEEEEEEEEEEEEEEEEEEEEEEEEEEEEEEEEEEEEEEEEEEEEEEEEVREAPKRSGGKPLPSPSLSSIFSNYDESSSVASSESSKQSRVKVSKKPSPLIKKKPAPIKKVTTPTRSKQQQQSPLPPTRRSPLPSEAKKPAASKKVSKNVLSSSSSSPSSSSSSSSSLTPTKSRRETIVTTPTKTPPSTRSKSITPLSTPTRTPPSTRSKTSSTPSSTPSSLSISTPSSTSISSPVSSRTSTSILTPPSTPTSTHSSTSASITTPTTPRIRVQRTTTTPTTPTTPRKKRRRRLVASVIRRLRNSVDFMIPRLPLSRLVREIMCLFDDGLRITPGALLAIQTTTEAYLTRLMEDSGLLASHAGRKTIRSVDMYAWKRARHFLF</sequence>
<protein>
    <recommendedName>
        <fullName>Histone H3.v1</fullName>
    </recommendedName>
</protein>